<keyword id="KW-0963">Cytoplasm</keyword>
<keyword id="KW-0269">Exonuclease</keyword>
<keyword id="KW-0378">Hydrolase</keyword>
<keyword id="KW-0540">Nuclease</keyword>
<proteinExistence type="inferred from homology"/>
<reference key="1">
    <citation type="journal article" date="2005" name="Jpn. Agric. Res. Q.">
        <title>Genome sequence of Xanthomonas oryzae pv. oryzae suggests contribution of large numbers of effector genes and insertion sequences to its race diversity.</title>
        <authorList>
            <person name="Ochiai H."/>
            <person name="Inoue Y."/>
            <person name="Takeya M."/>
            <person name="Sasaki A."/>
            <person name="Kaku H."/>
        </authorList>
    </citation>
    <scope>NUCLEOTIDE SEQUENCE [LARGE SCALE GENOMIC DNA]</scope>
    <source>
        <strain>MAFF 311018</strain>
    </source>
</reference>
<evidence type="ECO:0000255" key="1">
    <source>
        <dbReference type="HAMAP-Rule" id="MF_00378"/>
    </source>
</evidence>
<protein>
    <recommendedName>
        <fullName evidence="1">Exodeoxyribonuclease 7 large subunit</fullName>
        <ecNumber evidence="1">3.1.11.6</ecNumber>
    </recommendedName>
    <alternativeName>
        <fullName evidence="1">Exodeoxyribonuclease VII large subunit</fullName>
        <shortName evidence="1">Exonuclease VII large subunit</shortName>
    </alternativeName>
</protein>
<organism>
    <name type="scientific">Xanthomonas oryzae pv. oryzae (strain MAFF 311018)</name>
    <dbReference type="NCBI Taxonomy" id="342109"/>
    <lineage>
        <taxon>Bacteria</taxon>
        <taxon>Pseudomonadati</taxon>
        <taxon>Pseudomonadota</taxon>
        <taxon>Gammaproteobacteria</taxon>
        <taxon>Lysobacterales</taxon>
        <taxon>Lysobacteraceae</taxon>
        <taxon>Xanthomonas</taxon>
    </lineage>
</organism>
<dbReference type="EC" id="3.1.11.6" evidence="1"/>
<dbReference type="EMBL" id="AP008229">
    <property type="protein sequence ID" value="BAE69337.1"/>
    <property type="molecule type" value="Genomic_DNA"/>
</dbReference>
<dbReference type="RefSeq" id="WP_011408753.1">
    <property type="nucleotide sequence ID" value="NC_007705.1"/>
</dbReference>
<dbReference type="SMR" id="Q2P290"/>
<dbReference type="KEGG" id="xom:XOO2582"/>
<dbReference type="HOGENOM" id="CLU_023625_3_1_6"/>
<dbReference type="GO" id="GO:0005737">
    <property type="term" value="C:cytoplasm"/>
    <property type="evidence" value="ECO:0007669"/>
    <property type="project" value="UniProtKB-SubCell"/>
</dbReference>
<dbReference type="GO" id="GO:0009318">
    <property type="term" value="C:exodeoxyribonuclease VII complex"/>
    <property type="evidence" value="ECO:0007669"/>
    <property type="project" value="InterPro"/>
</dbReference>
<dbReference type="GO" id="GO:0008855">
    <property type="term" value="F:exodeoxyribonuclease VII activity"/>
    <property type="evidence" value="ECO:0007669"/>
    <property type="project" value="UniProtKB-UniRule"/>
</dbReference>
<dbReference type="GO" id="GO:0003676">
    <property type="term" value="F:nucleic acid binding"/>
    <property type="evidence" value="ECO:0007669"/>
    <property type="project" value="InterPro"/>
</dbReference>
<dbReference type="GO" id="GO:0006308">
    <property type="term" value="P:DNA catabolic process"/>
    <property type="evidence" value="ECO:0007669"/>
    <property type="project" value="UniProtKB-UniRule"/>
</dbReference>
<dbReference type="CDD" id="cd04489">
    <property type="entry name" value="ExoVII_LU_OBF"/>
    <property type="match status" value="1"/>
</dbReference>
<dbReference type="HAMAP" id="MF_00378">
    <property type="entry name" value="Exonuc_7_L"/>
    <property type="match status" value="1"/>
</dbReference>
<dbReference type="InterPro" id="IPR003753">
    <property type="entry name" value="Exonuc_VII_L"/>
</dbReference>
<dbReference type="InterPro" id="IPR020579">
    <property type="entry name" value="Exonuc_VII_lsu_C"/>
</dbReference>
<dbReference type="InterPro" id="IPR025824">
    <property type="entry name" value="OB-fold_nuc-bd_dom"/>
</dbReference>
<dbReference type="NCBIfam" id="TIGR00237">
    <property type="entry name" value="xseA"/>
    <property type="match status" value="1"/>
</dbReference>
<dbReference type="PANTHER" id="PTHR30008">
    <property type="entry name" value="EXODEOXYRIBONUCLEASE 7 LARGE SUBUNIT"/>
    <property type="match status" value="1"/>
</dbReference>
<dbReference type="PANTHER" id="PTHR30008:SF0">
    <property type="entry name" value="EXODEOXYRIBONUCLEASE 7 LARGE SUBUNIT"/>
    <property type="match status" value="1"/>
</dbReference>
<dbReference type="Pfam" id="PF02601">
    <property type="entry name" value="Exonuc_VII_L"/>
    <property type="match status" value="1"/>
</dbReference>
<dbReference type="Pfam" id="PF13742">
    <property type="entry name" value="tRNA_anti_2"/>
    <property type="match status" value="1"/>
</dbReference>
<comment type="function">
    <text evidence="1">Bidirectionally degrades single-stranded DNA into large acid-insoluble oligonucleotides, which are then degraded further into small acid-soluble oligonucleotides.</text>
</comment>
<comment type="catalytic activity">
    <reaction evidence="1">
        <text>Exonucleolytic cleavage in either 5'- to 3'- or 3'- to 5'-direction to yield nucleoside 5'-phosphates.</text>
        <dbReference type="EC" id="3.1.11.6"/>
    </reaction>
</comment>
<comment type="subunit">
    <text evidence="1">Heterooligomer composed of large and small subunits.</text>
</comment>
<comment type="subcellular location">
    <subcellularLocation>
        <location evidence="1">Cytoplasm</location>
    </subcellularLocation>
</comment>
<comment type="similarity">
    <text evidence="1">Belongs to the XseA family.</text>
</comment>
<feature type="chain" id="PRO_0000273704" description="Exodeoxyribonuclease 7 large subunit">
    <location>
        <begin position="1"/>
        <end position="445"/>
    </location>
</feature>
<gene>
    <name evidence="1" type="primary">xseA</name>
    <name type="ordered locus">XOO2582</name>
</gene>
<sequence>MAERNEQILTPSQLNALARDLLEGSFPLVWVEAELSSVTRPSSGHLYFTLKDARAQIRCAMFKPKSTWLKFQPREGLRVLARGRLTLYEARGDYQLVLDHMEEAGEGALRRAFDALRARLAAEGLFDAERKQSLPAHVQRLAVITSPSGAAVRDVLSVLARRFPLLEVDLLPSLVQGDSAAAQITSLLQRADASGRYDVILITRGGGSLEDLWAFNDERLARAIAAAQTPVVSAVGHETDFSLSDFVADVRAPTPSVAAELLVPDQRELVPRVRRAQARMTQLQQHALGNAMQRADRLALRLRAHSPQARLQLLHRRQEEAGRQLGARMTQVLERLQARVQRGHAQVQSHNPQRHLAGLQQRLRALHPQAAMQRRLQHDQLQLRSIARSLEAVNPLATVARGYAIVTRPADGSVVRSAAEVAAGERLRAQLADGSIEVRVEPGER</sequence>
<name>EX7L_XANOM</name>
<accession>Q2P290</accession>